<dbReference type="EC" id="1.14.13.-"/>
<dbReference type="EMBL" id="Y14759">
    <property type="protein sequence ID" value="CAA75051.1"/>
    <property type="molecule type" value="Genomic_DNA"/>
</dbReference>
<dbReference type="SMR" id="O54037"/>
<dbReference type="UniPathway" id="UPA00217"/>
<dbReference type="GO" id="GO:0051537">
    <property type="term" value="F:2 iron, 2 sulfur cluster binding"/>
    <property type="evidence" value="ECO:0007669"/>
    <property type="project" value="UniProtKB-KW"/>
</dbReference>
<dbReference type="GO" id="GO:0046872">
    <property type="term" value="F:metal ion binding"/>
    <property type="evidence" value="ECO:0007669"/>
    <property type="project" value="UniProtKB-KW"/>
</dbReference>
<dbReference type="GO" id="GO:0016491">
    <property type="term" value="F:oxidoreductase activity"/>
    <property type="evidence" value="ECO:0007669"/>
    <property type="project" value="UniProtKB-KW"/>
</dbReference>
<dbReference type="GO" id="GO:0046274">
    <property type="term" value="P:lignin catabolic process"/>
    <property type="evidence" value="ECO:0007669"/>
    <property type="project" value="UniProtKB-KW"/>
</dbReference>
<dbReference type="CDD" id="cd00207">
    <property type="entry name" value="fer2"/>
    <property type="match status" value="1"/>
</dbReference>
<dbReference type="CDD" id="cd06185">
    <property type="entry name" value="PDR_like"/>
    <property type="match status" value="1"/>
</dbReference>
<dbReference type="Gene3D" id="3.10.20.30">
    <property type="match status" value="1"/>
</dbReference>
<dbReference type="Gene3D" id="3.40.50.80">
    <property type="entry name" value="Nucleotide-binding domain of ferredoxin-NADP reductase (FNR) module"/>
    <property type="match status" value="1"/>
</dbReference>
<dbReference type="Gene3D" id="2.40.30.10">
    <property type="entry name" value="Translation factors"/>
    <property type="match status" value="1"/>
</dbReference>
<dbReference type="InterPro" id="IPR036010">
    <property type="entry name" value="2Fe-2S_ferredoxin-like_sf"/>
</dbReference>
<dbReference type="InterPro" id="IPR001041">
    <property type="entry name" value="2Fe-2S_ferredoxin-type"/>
</dbReference>
<dbReference type="InterPro" id="IPR006058">
    <property type="entry name" value="2Fe2S_fd_BS"/>
</dbReference>
<dbReference type="InterPro" id="IPR012675">
    <property type="entry name" value="Beta-grasp_dom_sf"/>
</dbReference>
<dbReference type="InterPro" id="IPR054582">
    <property type="entry name" value="DmmA-like_N"/>
</dbReference>
<dbReference type="InterPro" id="IPR017927">
    <property type="entry name" value="FAD-bd_FR_type"/>
</dbReference>
<dbReference type="InterPro" id="IPR039261">
    <property type="entry name" value="FNR_nucleotide-bd"/>
</dbReference>
<dbReference type="InterPro" id="IPR050415">
    <property type="entry name" value="MRET"/>
</dbReference>
<dbReference type="InterPro" id="IPR017938">
    <property type="entry name" value="Riboflavin_synthase-like_b-brl"/>
</dbReference>
<dbReference type="PANTHER" id="PTHR47354:SF1">
    <property type="entry name" value="CARNITINE MONOOXYGENASE REDUCTASE SUBUNIT"/>
    <property type="match status" value="1"/>
</dbReference>
<dbReference type="PANTHER" id="PTHR47354">
    <property type="entry name" value="NADH OXIDOREDUCTASE HCR"/>
    <property type="match status" value="1"/>
</dbReference>
<dbReference type="Pfam" id="PF22290">
    <property type="entry name" value="DmmA-like_N"/>
    <property type="match status" value="1"/>
</dbReference>
<dbReference type="Pfam" id="PF00111">
    <property type="entry name" value="Fer2"/>
    <property type="match status" value="1"/>
</dbReference>
<dbReference type="PRINTS" id="PR00409">
    <property type="entry name" value="PHDIOXRDTASE"/>
</dbReference>
<dbReference type="SUPFAM" id="SSF54292">
    <property type="entry name" value="2Fe-2S ferredoxin-like"/>
    <property type="match status" value="1"/>
</dbReference>
<dbReference type="SUPFAM" id="SSF52343">
    <property type="entry name" value="Ferredoxin reductase-like, C-terminal NADP-linked domain"/>
    <property type="match status" value="1"/>
</dbReference>
<dbReference type="SUPFAM" id="SSF63380">
    <property type="entry name" value="Riboflavin synthase domain-like"/>
    <property type="match status" value="1"/>
</dbReference>
<dbReference type="PROSITE" id="PS00197">
    <property type="entry name" value="2FE2S_FER_1"/>
    <property type="match status" value="1"/>
</dbReference>
<dbReference type="PROSITE" id="PS51085">
    <property type="entry name" value="2FE2S_FER_2"/>
    <property type="match status" value="1"/>
</dbReference>
<dbReference type="PROSITE" id="PS51384">
    <property type="entry name" value="FAD_FR"/>
    <property type="match status" value="1"/>
</dbReference>
<gene>
    <name type="primary">vanB</name>
</gene>
<feature type="chain" id="PRO_0000189404" description="Vanillate O-demethylase oxidoreductase">
    <location>
        <begin position="1"/>
        <end position="315"/>
    </location>
</feature>
<feature type="domain" description="FAD-binding FR-type" evidence="3">
    <location>
        <begin position="1"/>
        <end position="100"/>
    </location>
</feature>
<feature type="domain" description="2Fe-2S ferredoxin-type" evidence="2">
    <location>
        <begin position="227"/>
        <end position="315"/>
    </location>
</feature>
<feature type="binding site">
    <location>
        <begin position="1"/>
        <end position="94"/>
    </location>
    <ligand>
        <name>FMN</name>
        <dbReference type="ChEBI" id="CHEBI:58210"/>
    </ligand>
</feature>
<feature type="binding site">
    <location>
        <begin position="104"/>
        <end position="217"/>
    </location>
    <ligand>
        <name>NAD(+)</name>
        <dbReference type="ChEBI" id="CHEBI:57540"/>
    </ligand>
</feature>
<feature type="binding site" evidence="2">
    <location>
        <position position="263"/>
    </location>
    <ligand>
        <name>[2Fe-2S] cluster</name>
        <dbReference type="ChEBI" id="CHEBI:190135"/>
    </ligand>
</feature>
<feature type="binding site" evidence="2">
    <location>
        <position position="268"/>
    </location>
    <ligand>
        <name>[2Fe-2S] cluster</name>
        <dbReference type="ChEBI" id="CHEBI:190135"/>
    </ligand>
</feature>
<feature type="binding site" evidence="2">
    <location>
        <position position="271"/>
    </location>
    <ligand>
        <name>[2Fe-2S] cluster</name>
        <dbReference type="ChEBI" id="CHEBI:190135"/>
    </ligand>
</feature>
<feature type="binding site" evidence="2">
    <location>
        <position position="303"/>
    </location>
    <ligand>
        <name>[2Fe-2S] cluster</name>
        <dbReference type="ChEBI" id="CHEBI:190135"/>
    </ligand>
</feature>
<proteinExistence type="inferred from homology"/>
<evidence type="ECO:0000250" key="1"/>
<evidence type="ECO:0000255" key="2">
    <source>
        <dbReference type="PROSITE-ProRule" id="PRU00465"/>
    </source>
</evidence>
<evidence type="ECO:0000255" key="3">
    <source>
        <dbReference type="PROSITE-ProRule" id="PRU00716"/>
    </source>
</evidence>
<evidence type="ECO:0000305" key="4"/>
<accession>O54037</accession>
<protein>
    <recommendedName>
        <fullName>Vanillate O-demethylase oxidoreductase</fullName>
        <ecNumber>1.14.13.-</ecNumber>
    </recommendedName>
    <alternativeName>
        <fullName>Vanillate degradation ferredoxin-like protein</fullName>
    </alternativeName>
</protein>
<comment type="cofactor">
    <cofactor evidence="1">
        <name>FMN</name>
        <dbReference type="ChEBI" id="CHEBI:58210"/>
    </cofactor>
</comment>
<comment type="pathway">
    <text>Xenobiotic degradation; vanillyl-alcohol degradation.</text>
</comment>
<comment type="similarity">
    <text evidence="4">Belongs to the PDR/VanB family.</text>
</comment>
<keyword id="KW-0001">2Fe-2S</keyword>
<keyword id="KW-0058">Aromatic hydrocarbons catabolism</keyword>
<keyword id="KW-0249">Electron transport</keyword>
<keyword id="KW-0285">Flavoprotein</keyword>
<keyword id="KW-0288">FMN</keyword>
<keyword id="KW-0408">Iron</keyword>
<keyword id="KW-0411">Iron-sulfur</keyword>
<keyword id="KW-0439">Lignin degradation</keyword>
<keyword id="KW-0479">Metal-binding</keyword>
<keyword id="KW-0520">NAD</keyword>
<keyword id="KW-0560">Oxidoreductase</keyword>
<keyword id="KW-0813">Transport</keyword>
<name>VANB_PSEPU</name>
<reference key="1">
    <citation type="journal article" date="1998" name="Microbiology">
        <title>Genetics of ferulic acid bioconversion to protocatechuic acid in plant-growth-promoting Pseudomonas putida WCS358.</title>
        <authorList>
            <person name="Venturi V."/>
            <person name="Zennaro F."/>
            <person name="Degrassi G."/>
            <person name="Okeke B."/>
            <person name="Bruschi C."/>
        </authorList>
    </citation>
    <scope>NUCLEOTIDE SEQUENCE [GENOMIC DNA]</scope>
    <source>
        <strain>WCS358</strain>
    </source>
</reference>
<sequence>MIDAVVVSRNDEAQDICSFELAAVDGSLLRFSAGAHIDVHLPEGQVRQYSLCNHPEERHRYLIGVLKDPASRGGSRSLHEQIHNGARLRISAPRNLFPLAQGARRSLLFAGGIGITPILCMAEQLAASADFELHYCARSSERAAFIERMRGAAFADRLFVHFDEQPETALDIAQVLANPQADVHLYVCGPGGFMQHVLESAKAQGWQEACLHREYFAAAPVDTQGDGSFSVQLNSTGQVFEVPADQSVVHVLEQHGIAIAMSCEQGICGTCLTRVLSGTPEASRPVFLTEQEQALNDQFTPCCSRSKTPLLVLDL</sequence>
<organism>
    <name type="scientific">Pseudomonas putida</name>
    <name type="common">Arthrobacter siderocapsulatus</name>
    <dbReference type="NCBI Taxonomy" id="303"/>
    <lineage>
        <taxon>Bacteria</taxon>
        <taxon>Pseudomonadati</taxon>
        <taxon>Pseudomonadota</taxon>
        <taxon>Gammaproteobacteria</taxon>
        <taxon>Pseudomonadales</taxon>
        <taxon>Pseudomonadaceae</taxon>
        <taxon>Pseudomonas</taxon>
    </lineage>
</organism>